<evidence type="ECO:0000255" key="1"/>
<evidence type="ECO:0000255" key="2">
    <source>
        <dbReference type="PROSITE-ProRule" id="PRU00557"/>
    </source>
</evidence>
<evidence type="ECO:0000255" key="3">
    <source>
        <dbReference type="PROSITE-ProRule" id="PRU00580"/>
    </source>
</evidence>
<evidence type="ECO:0000256" key="4">
    <source>
        <dbReference type="SAM" id="MobiDB-lite"/>
    </source>
</evidence>
<evidence type="ECO:0000269" key="5">
    <source>
    </source>
</evidence>
<evidence type="ECO:0000269" key="6">
    <source>
    </source>
</evidence>
<evidence type="ECO:0000305" key="7"/>
<evidence type="ECO:0000305" key="8">
    <source>
    </source>
</evidence>
<name>VIT1_CAEEL</name>
<sequence length="1616" mass="188063">MRSIIIASIVALAIAFSPAFERTFEPKIDYHYKFDGLVLSGLPTASSELSQSRFSARVRIQAVDDRHIHLQLVNIHMAASHLPESEQIPSLNSMEQRELSEEYKQMLKLPLRAQLRNGLIAELQFDKEDAEWSKNMKRAVVNMISFNPIAPRNEIEKIESSYDKEEQSEENTSFFTNEKTLEGDCQVAYTVIREQKKTIITKSINFDKCTERSEIAYGLRYSSECPECEKDTVLIRPQTVYTYILENEELKESEVRSLYTVNVNGQEVMKTETRSKLVLEENHSIKSHIEKVNGEKESIIYSSRWEQLVEDFFKNGDKAEFAPFEKFPLDKKMHLIKTITEQIQEVENNIPETSHFLARLVRIFRTTSTSQLKEIHETLYVKADKKIQSLMEHALAIAGTKNTIQHILVHIENEDIVPLEAAQLLKSIQETPFPSQTIAEALIKFAESRVSKNNQVVRQSAWLAAGSVVRGIVDYKNIRPLVREDKRELKEKFLRVFMQQYKDAETTYEKILALKSIGNAGLDISVNQLNEIIVDKRQLLPVRKEAIDALRLLKDTMPRKIQKVLLPIYKNRQYEPEIRMLALWRMMHTRPEESLLVQVVSQMEKETNQQVAALTHQMIRHFAKSTNPCYQRVAIVCSKVLSFTRYQPQEQMIASSYAQLPLFLQNSFSGAQFDFAAIFEKNSFLLKDLHASLDAVFGGNWNKYFAQIGFSQQHMDKYVQMALEKLESIEKESTTVVRGRRIQTGITLLKELALKMNIRARPANYNEKDAFAMVYLRYKDMDYAILPVDTQLIEKLIEKYISNGKVQFSEIRRLLNQEHEFETHHAAYFYEAIRKFPTTLGLPLIVSGKIPTVFSAEGQFSLGLEETELRLTVEARPSVAATHVYEMRMFTPLFEQGVKSVQSVRAYTPIKIQAVVGMKRNFEIVYKVVVPENQKSIISLTTRPVVFLRFPGFSKFEYIEAEERTVVVPQWQQKTQEIEKVFNFLGLEVSTRGNILNQHTLENWLLAEQDFEVSVENKYRPAEFTARLTVGQLEKTELSQIKYNKIFEKEFELEQENTESRREYFTKMVKSIQKEQGYKSVVSLRLEAPRDYTMNTEVTTVCDKQVRMCQWEVEIRRSPILEETKEWTLRSQLLVVRPEMPSSLRQLHDQPHREVQLSLTSTWGSQKKSEVTVNAQLQQSKEQKKYERNMDRHFNGMPEYELLIKAARLNQINAVAEYKLTRETEQVLARYFDLVKAYNYWTVSSRPENNENDRVVVQLTVEPMSRQYVNITMQSPIERVELKNVQVPRVYLPSIAQRSVKHLLNEASGSVCKVQKNQIRTFDDVLYNTPLTTCYSLIAKDCSEEPTFAVLSKKTEKNSEEMIIKVIRGEQEIVAQLQNEEIRVKVDGKKILSEDYSAHQIERLGESDIVIELPEGEVRFDGYTIKTQLPSYSRKNQLCGLCGNNDDESTNEFYTSDNTETKDIEEFHRSYLLKNEECEAEEERLSEKKNYRKYDERKYESEEYSFEETYDYEQENTNKKQKNQRSQKKSDLVEKTQIKEFSHRICFSVEPVAECRRRGYEAVEQQQRKVRFTCLPRHSSEARRLVKEARQGTVQLDDHKISFVHSVQVPVACVAY</sequence>
<protein>
    <recommendedName>
        <fullName>Vitellogenin-1</fullName>
    </recommendedName>
</protein>
<accession>P55155</accession>
<comment type="function">
    <text evidence="6 7">Precursor of the egg-yolk proteins that are sources of nutrients during embryonic development (Probable). Together with other vitellogenins, may play a role in modulating life-span, acting via induction of autophagy and lysosomal lipolysis (PubMed:26671266).</text>
</comment>
<comment type="subcellular location">
    <subcellularLocation>
        <location evidence="8">Secreted</location>
    </subcellularLocation>
</comment>
<comment type="tissue specificity">
    <text evidence="8">Expressed in the intestine of adult hermaphrodites.</text>
</comment>
<comment type="disruption phenotype">
    <text evidence="6">Simultaneous RNAi-mediated knockdown of vitellogenins vit-1, vit-2, vit-3, vit-4 and vit-5 increases life span, causes accumulation of neutral lipid and an increase in lgg-1 foci in the proximal intestine; however, does not affect fertility or pharyngeal pumping rates (PubMed:26671266). Expression of transcription factors pha-4 and daf-16 are increased (PubMed:26671266).</text>
</comment>
<comment type="caution">
    <text evidence="8">High sequence similarity with other vitellogenin genes means that assigning functions to individual proteins is difficult; authors sometimes refer to VITs or vitellogenins.</text>
</comment>
<proteinExistence type="evidence at protein level"/>
<keyword id="KW-1015">Disulfide bond</keyword>
<keyword id="KW-0325">Glycoprotein</keyword>
<keyword id="KW-1185">Reference proteome</keyword>
<keyword id="KW-0964">Secreted</keyword>
<keyword id="KW-0732">Signal</keyword>
<keyword id="KW-0758">Storage protein</keyword>
<organism>
    <name type="scientific">Caenorhabditis elegans</name>
    <dbReference type="NCBI Taxonomy" id="6239"/>
    <lineage>
        <taxon>Eukaryota</taxon>
        <taxon>Metazoa</taxon>
        <taxon>Ecdysozoa</taxon>
        <taxon>Nematoda</taxon>
        <taxon>Chromadorea</taxon>
        <taxon>Rhabditida</taxon>
        <taxon>Rhabditina</taxon>
        <taxon>Rhabditomorpha</taxon>
        <taxon>Rhabditoidea</taxon>
        <taxon>Rhabditidae</taxon>
        <taxon>Peloderinae</taxon>
        <taxon>Caenorhabditis</taxon>
    </lineage>
</organism>
<gene>
    <name type="primary">vit-1</name>
    <name type="ORF">K09F5.2</name>
</gene>
<reference key="1">
    <citation type="journal article" date="1998" name="Science">
        <title>Genome sequence of the nematode C. elegans: a platform for investigating biology.</title>
        <authorList>
            <consortium name="The C. elegans sequencing consortium"/>
        </authorList>
    </citation>
    <scope>NUCLEOTIDE SEQUENCE [LARGE SCALE GENOMIC DNA]</scope>
    <source>
        <strain>Bristol N2</strain>
    </source>
</reference>
<reference key="2">
    <citation type="journal article" date="2007" name="Mol. Cell. Proteomics">
        <title>Proteomics reveals N-linked glycoprotein diversity in Caenorhabditis elegans and suggests an atypical translocation mechanism for integral membrane proteins.</title>
        <authorList>
            <person name="Kaji H."/>
            <person name="Kamiie J."/>
            <person name="Kawakami H."/>
            <person name="Kido K."/>
            <person name="Yamauchi Y."/>
            <person name="Shinkawa T."/>
            <person name="Taoka M."/>
            <person name="Takahashi N."/>
            <person name="Isobe T."/>
        </authorList>
    </citation>
    <scope>GLYCOSYLATION [LARGE SCALE ANALYSIS] AT ASN-1270</scope>
    <scope>IDENTIFICATION BY MASS SPECTROMETRY</scope>
    <source>
        <strain>Bristol N2</strain>
    </source>
</reference>
<reference key="3">
    <citation type="journal article" date="2016" name="Autophagy">
        <title>Autophagy-mediated longevity is modulated by lipoprotein biogenesis.</title>
        <authorList>
            <person name="Seah N.E."/>
            <person name="de Magalhaes Filho C.D."/>
            <person name="Petrashen A.P."/>
            <person name="Henderson H.R."/>
            <person name="Laguer J."/>
            <person name="Gonzalez J."/>
            <person name="Dillin A."/>
            <person name="Hansen M."/>
            <person name="Lapierre L.R."/>
        </authorList>
    </citation>
    <scope>FUNCTION</scope>
    <scope>SUBCELLULAR LOCATION</scope>
    <scope>TISSUE SPECIFICITY</scope>
    <scope>DISRUPTION PHENOTYPE</scope>
</reference>
<feature type="signal peptide" evidence="1">
    <location>
        <begin position="1"/>
        <end position="19"/>
    </location>
</feature>
<feature type="chain" id="PRO_0000041532" description="Vitellogenin-1">
    <location>
        <begin position="20"/>
        <end position="1616"/>
    </location>
</feature>
<feature type="domain" description="Vitellogenin" evidence="2">
    <location>
        <begin position="24"/>
        <end position="689"/>
    </location>
</feature>
<feature type="domain" description="VWFD" evidence="3">
    <location>
        <begin position="1310"/>
        <end position="1479"/>
    </location>
</feature>
<feature type="region of interest" description="Disordered" evidence="4">
    <location>
        <begin position="1505"/>
        <end position="1531"/>
    </location>
</feature>
<feature type="compositionally biased region" description="Acidic residues" evidence="4">
    <location>
        <begin position="1505"/>
        <end position="1514"/>
    </location>
</feature>
<feature type="glycosylation site" description="N-linked (GlcNAc...) asparagine" evidence="5">
    <location>
        <position position="1270"/>
    </location>
</feature>
<feature type="disulfide bond" evidence="3">
    <location>
        <begin position="1312"/>
        <end position="1442"/>
    </location>
</feature>
<feature type="disulfide bond" evidence="3">
    <location>
        <begin position="1334"/>
        <end position="1478"/>
    </location>
</feature>
<dbReference type="EMBL" id="FO080893">
    <property type="protein sequence ID" value="CCD67565.1"/>
    <property type="molecule type" value="Genomic_DNA"/>
</dbReference>
<dbReference type="PIR" id="T16600">
    <property type="entry name" value="T16600"/>
</dbReference>
<dbReference type="RefSeq" id="NP_001367671.1">
    <property type="nucleotide sequence ID" value="NM_001381026.1"/>
</dbReference>
<dbReference type="RefSeq" id="NP_509305.1">
    <property type="nucleotide sequence ID" value="NM_076904.8"/>
</dbReference>
<dbReference type="SMR" id="P55155"/>
<dbReference type="BioGRID" id="45958">
    <property type="interactions" value="15"/>
</dbReference>
<dbReference type="FunCoup" id="P55155">
    <property type="interactions" value="431"/>
</dbReference>
<dbReference type="IntAct" id="P55155">
    <property type="interactions" value="1"/>
</dbReference>
<dbReference type="STRING" id="6239.K09F5.2.1"/>
<dbReference type="GlyCosmos" id="P55155">
    <property type="glycosylation" value="1 site, No reported glycans"/>
</dbReference>
<dbReference type="iPTMnet" id="P55155"/>
<dbReference type="PaxDb" id="6239-K09F5.2"/>
<dbReference type="PeptideAtlas" id="P55155"/>
<dbReference type="EnsemblMetazoa" id="K09F5.2.1">
    <property type="protein sequence ID" value="K09F5.2.1"/>
    <property type="gene ID" value="WBGene00006925"/>
</dbReference>
<dbReference type="GeneID" id="181034"/>
<dbReference type="UCSC" id="K09F5.2">
    <property type="organism name" value="c. elegans"/>
</dbReference>
<dbReference type="AGR" id="WB:WBGene00006925"/>
<dbReference type="WormBase" id="K09F5.2">
    <property type="protein sequence ID" value="CE04746"/>
    <property type="gene ID" value="WBGene00006925"/>
    <property type="gene designation" value="vit-1"/>
</dbReference>
<dbReference type="eggNOG" id="KOG4338">
    <property type="taxonomic scope" value="Eukaryota"/>
</dbReference>
<dbReference type="GeneTree" id="ENSGT00530000064273"/>
<dbReference type="HOGENOM" id="CLU_003821_0_0_1"/>
<dbReference type="InParanoid" id="P55155"/>
<dbReference type="OMA" id="SHHFYKP"/>
<dbReference type="OrthoDB" id="5825149at2759"/>
<dbReference type="PhylomeDB" id="P55155"/>
<dbReference type="PRO" id="PR:P55155"/>
<dbReference type="Proteomes" id="UP000001940">
    <property type="component" value="Chromosome X"/>
</dbReference>
<dbReference type="Bgee" id="WBGene00006925">
    <property type="expression patterns" value="Expressed in adult organism and 3 other cell types or tissues"/>
</dbReference>
<dbReference type="GO" id="GO:0005576">
    <property type="term" value="C:extracellular region"/>
    <property type="evidence" value="ECO:0007669"/>
    <property type="project" value="UniProtKB-SubCell"/>
</dbReference>
<dbReference type="GO" id="GO:0005319">
    <property type="term" value="F:lipid transporter activity"/>
    <property type="evidence" value="ECO:0000318"/>
    <property type="project" value="GO_Central"/>
</dbReference>
<dbReference type="GO" id="GO:0045735">
    <property type="term" value="F:nutrient reservoir activity"/>
    <property type="evidence" value="ECO:0007669"/>
    <property type="project" value="UniProtKB-KW"/>
</dbReference>
<dbReference type="FunFam" id="1.25.10.20:FF:000003">
    <property type="entry name" value="Vitellogenin C"/>
    <property type="match status" value="1"/>
</dbReference>
<dbReference type="FunFam" id="2.30.230.10:FF:000004">
    <property type="entry name" value="Vitellogenin-1"/>
    <property type="match status" value="1"/>
</dbReference>
<dbReference type="FunFam" id="2.20.80.10:FF:000004">
    <property type="entry name" value="Vitellogenin-3"/>
    <property type="match status" value="1"/>
</dbReference>
<dbReference type="Gene3D" id="2.30.230.10">
    <property type="entry name" value="Lipovitellin, beta-sheet shell regions, chain A"/>
    <property type="match status" value="1"/>
</dbReference>
<dbReference type="Gene3D" id="2.20.80.10">
    <property type="entry name" value="Lipovitellin-phosvitin complex, chain A, domain 4"/>
    <property type="match status" value="1"/>
</dbReference>
<dbReference type="Gene3D" id="1.25.10.20">
    <property type="entry name" value="Vitellinogen, superhelical"/>
    <property type="match status" value="1"/>
</dbReference>
<dbReference type="InterPro" id="IPR015819">
    <property type="entry name" value="Lipid_transp_b-sht_shell"/>
</dbReference>
<dbReference type="InterPro" id="IPR011030">
    <property type="entry name" value="Lipovitellin_superhlx_dom"/>
</dbReference>
<dbReference type="InterPro" id="IPR015816">
    <property type="entry name" value="Vitellinogen_b-sht_N"/>
</dbReference>
<dbReference type="InterPro" id="IPR015255">
    <property type="entry name" value="Vitellinogen_open_b-sht"/>
</dbReference>
<dbReference type="InterPro" id="IPR050733">
    <property type="entry name" value="Vitellogenin/Apolipophorin"/>
</dbReference>
<dbReference type="InterPro" id="IPR001747">
    <property type="entry name" value="Vitellogenin_N"/>
</dbReference>
<dbReference type="InterPro" id="IPR001846">
    <property type="entry name" value="VWF_type-D"/>
</dbReference>
<dbReference type="PANTHER" id="PTHR23345:SF12">
    <property type="entry name" value="VITELLOGENIN-1-RELATED"/>
    <property type="match status" value="1"/>
</dbReference>
<dbReference type="PANTHER" id="PTHR23345">
    <property type="entry name" value="VITELLOGENIN-RELATED"/>
    <property type="match status" value="1"/>
</dbReference>
<dbReference type="Pfam" id="PF09172">
    <property type="entry name" value="Vit_open_b-sht"/>
    <property type="match status" value="1"/>
</dbReference>
<dbReference type="Pfam" id="PF01347">
    <property type="entry name" value="Vitellogenin_N"/>
    <property type="match status" value="1"/>
</dbReference>
<dbReference type="Pfam" id="PF00094">
    <property type="entry name" value="VWD"/>
    <property type="match status" value="1"/>
</dbReference>
<dbReference type="SMART" id="SM01169">
    <property type="entry name" value="DUF1943"/>
    <property type="match status" value="1"/>
</dbReference>
<dbReference type="SMART" id="SM00638">
    <property type="entry name" value="LPD_N"/>
    <property type="match status" value="1"/>
</dbReference>
<dbReference type="SMART" id="SM00216">
    <property type="entry name" value="VWD"/>
    <property type="match status" value="1"/>
</dbReference>
<dbReference type="SUPFAM" id="SSF56968">
    <property type="entry name" value="Lipovitellin-phosvitin complex, beta-sheet shell regions"/>
    <property type="match status" value="2"/>
</dbReference>
<dbReference type="SUPFAM" id="SSF48431">
    <property type="entry name" value="Lipovitellin-phosvitin complex, superhelical domain"/>
    <property type="match status" value="1"/>
</dbReference>
<dbReference type="PROSITE" id="PS51211">
    <property type="entry name" value="VITELLOGENIN"/>
    <property type="match status" value="1"/>
</dbReference>
<dbReference type="PROSITE" id="PS51233">
    <property type="entry name" value="VWFD"/>
    <property type="match status" value="1"/>
</dbReference>